<proteinExistence type="inferred from homology"/>
<accession>Q0AFY6</accession>
<dbReference type="EC" id="2.2.1.7" evidence="1"/>
<dbReference type="EMBL" id="CP000450">
    <property type="protein sequence ID" value="ABI59746.1"/>
    <property type="molecule type" value="Genomic_DNA"/>
</dbReference>
<dbReference type="RefSeq" id="WP_011634552.1">
    <property type="nucleotide sequence ID" value="NC_008344.1"/>
</dbReference>
<dbReference type="SMR" id="Q0AFY6"/>
<dbReference type="STRING" id="335283.Neut_1501"/>
<dbReference type="KEGG" id="net:Neut_1501"/>
<dbReference type="eggNOG" id="COG1154">
    <property type="taxonomic scope" value="Bacteria"/>
</dbReference>
<dbReference type="HOGENOM" id="CLU_009227_1_4_4"/>
<dbReference type="OrthoDB" id="9803371at2"/>
<dbReference type="UniPathway" id="UPA00064">
    <property type="reaction ID" value="UER00091"/>
</dbReference>
<dbReference type="Proteomes" id="UP000001966">
    <property type="component" value="Chromosome"/>
</dbReference>
<dbReference type="GO" id="GO:0005829">
    <property type="term" value="C:cytosol"/>
    <property type="evidence" value="ECO:0007669"/>
    <property type="project" value="TreeGrafter"/>
</dbReference>
<dbReference type="GO" id="GO:0008661">
    <property type="term" value="F:1-deoxy-D-xylulose-5-phosphate synthase activity"/>
    <property type="evidence" value="ECO:0007669"/>
    <property type="project" value="UniProtKB-UniRule"/>
</dbReference>
<dbReference type="GO" id="GO:0000287">
    <property type="term" value="F:magnesium ion binding"/>
    <property type="evidence" value="ECO:0007669"/>
    <property type="project" value="UniProtKB-UniRule"/>
</dbReference>
<dbReference type="GO" id="GO:0030976">
    <property type="term" value="F:thiamine pyrophosphate binding"/>
    <property type="evidence" value="ECO:0007669"/>
    <property type="project" value="UniProtKB-UniRule"/>
</dbReference>
<dbReference type="GO" id="GO:0052865">
    <property type="term" value="P:1-deoxy-D-xylulose 5-phosphate biosynthetic process"/>
    <property type="evidence" value="ECO:0007669"/>
    <property type="project" value="UniProtKB-UniPathway"/>
</dbReference>
<dbReference type="GO" id="GO:0019288">
    <property type="term" value="P:isopentenyl diphosphate biosynthetic process, methylerythritol 4-phosphate pathway"/>
    <property type="evidence" value="ECO:0007669"/>
    <property type="project" value="TreeGrafter"/>
</dbReference>
<dbReference type="GO" id="GO:0016114">
    <property type="term" value="P:terpenoid biosynthetic process"/>
    <property type="evidence" value="ECO:0007669"/>
    <property type="project" value="UniProtKB-UniRule"/>
</dbReference>
<dbReference type="GO" id="GO:0009228">
    <property type="term" value="P:thiamine biosynthetic process"/>
    <property type="evidence" value="ECO:0007669"/>
    <property type="project" value="UniProtKB-UniRule"/>
</dbReference>
<dbReference type="CDD" id="cd02007">
    <property type="entry name" value="TPP_DXS"/>
    <property type="match status" value="1"/>
</dbReference>
<dbReference type="CDD" id="cd07033">
    <property type="entry name" value="TPP_PYR_DXS_TK_like"/>
    <property type="match status" value="1"/>
</dbReference>
<dbReference type="FunFam" id="3.40.50.920:FF:000002">
    <property type="entry name" value="1-deoxy-D-xylulose-5-phosphate synthase"/>
    <property type="match status" value="1"/>
</dbReference>
<dbReference type="FunFam" id="3.40.50.970:FF:000005">
    <property type="entry name" value="1-deoxy-D-xylulose-5-phosphate synthase"/>
    <property type="match status" value="1"/>
</dbReference>
<dbReference type="Gene3D" id="3.40.50.920">
    <property type="match status" value="1"/>
</dbReference>
<dbReference type="Gene3D" id="3.40.50.970">
    <property type="match status" value="2"/>
</dbReference>
<dbReference type="HAMAP" id="MF_00315">
    <property type="entry name" value="DXP_synth"/>
    <property type="match status" value="1"/>
</dbReference>
<dbReference type="InterPro" id="IPR005477">
    <property type="entry name" value="Dxylulose-5-P_synthase"/>
</dbReference>
<dbReference type="InterPro" id="IPR029061">
    <property type="entry name" value="THDP-binding"/>
</dbReference>
<dbReference type="InterPro" id="IPR009014">
    <property type="entry name" value="Transketo_C/PFOR_II"/>
</dbReference>
<dbReference type="InterPro" id="IPR005475">
    <property type="entry name" value="Transketolase-like_Pyr-bd"/>
</dbReference>
<dbReference type="InterPro" id="IPR020826">
    <property type="entry name" value="Transketolase_BS"/>
</dbReference>
<dbReference type="InterPro" id="IPR033248">
    <property type="entry name" value="Transketolase_C"/>
</dbReference>
<dbReference type="InterPro" id="IPR049557">
    <property type="entry name" value="Transketolase_CS"/>
</dbReference>
<dbReference type="NCBIfam" id="TIGR00204">
    <property type="entry name" value="dxs"/>
    <property type="match status" value="1"/>
</dbReference>
<dbReference type="NCBIfam" id="NF003933">
    <property type="entry name" value="PRK05444.2-2"/>
    <property type="match status" value="1"/>
</dbReference>
<dbReference type="PANTHER" id="PTHR43322">
    <property type="entry name" value="1-D-DEOXYXYLULOSE 5-PHOSPHATE SYNTHASE-RELATED"/>
    <property type="match status" value="1"/>
</dbReference>
<dbReference type="PANTHER" id="PTHR43322:SF5">
    <property type="entry name" value="1-DEOXY-D-XYLULOSE-5-PHOSPHATE SYNTHASE, CHLOROPLASTIC"/>
    <property type="match status" value="1"/>
</dbReference>
<dbReference type="Pfam" id="PF13292">
    <property type="entry name" value="DXP_synthase_N"/>
    <property type="match status" value="1"/>
</dbReference>
<dbReference type="Pfam" id="PF02779">
    <property type="entry name" value="Transket_pyr"/>
    <property type="match status" value="1"/>
</dbReference>
<dbReference type="Pfam" id="PF02780">
    <property type="entry name" value="Transketolase_C"/>
    <property type="match status" value="1"/>
</dbReference>
<dbReference type="SMART" id="SM00861">
    <property type="entry name" value="Transket_pyr"/>
    <property type="match status" value="1"/>
</dbReference>
<dbReference type="SUPFAM" id="SSF52518">
    <property type="entry name" value="Thiamin diphosphate-binding fold (THDP-binding)"/>
    <property type="match status" value="2"/>
</dbReference>
<dbReference type="SUPFAM" id="SSF52922">
    <property type="entry name" value="TK C-terminal domain-like"/>
    <property type="match status" value="1"/>
</dbReference>
<dbReference type="PROSITE" id="PS00801">
    <property type="entry name" value="TRANSKETOLASE_1"/>
    <property type="match status" value="1"/>
</dbReference>
<dbReference type="PROSITE" id="PS00802">
    <property type="entry name" value="TRANSKETOLASE_2"/>
    <property type="match status" value="1"/>
</dbReference>
<reference key="1">
    <citation type="journal article" date="2007" name="Environ. Microbiol.">
        <title>Whole-genome analysis of the ammonia-oxidizing bacterium, Nitrosomonas eutropha C91: implications for niche adaptation.</title>
        <authorList>
            <person name="Stein L.Y."/>
            <person name="Arp D.J."/>
            <person name="Berube P.M."/>
            <person name="Chain P.S."/>
            <person name="Hauser L."/>
            <person name="Jetten M.S."/>
            <person name="Klotz M.G."/>
            <person name="Larimer F.W."/>
            <person name="Norton J.M."/>
            <person name="Op den Camp H.J.M."/>
            <person name="Shin M."/>
            <person name="Wei X."/>
        </authorList>
    </citation>
    <scope>NUCLEOTIDE SEQUENCE [LARGE SCALE GENOMIC DNA]</scope>
    <source>
        <strain>DSM 101675 / C91 / Nm57</strain>
    </source>
</reference>
<gene>
    <name evidence="1" type="primary">dxs</name>
    <name type="ordered locus">Neut_1501</name>
</gene>
<keyword id="KW-0414">Isoprene biosynthesis</keyword>
<keyword id="KW-0460">Magnesium</keyword>
<keyword id="KW-0479">Metal-binding</keyword>
<keyword id="KW-0784">Thiamine biosynthesis</keyword>
<keyword id="KW-0786">Thiamine pyrophosphate</keyword>
<keyword id="KW-0808">Transferase</keyword>
<name>DXS_NITEC</name>
<evidence type="ECO:0000255" key="1">
    <source>
        <dbReference type="HAMAP-Rule" id="MF_00315"/>
    </source>
</evidence>
<comment type="function">
    <text evidence="1">Catalyzes the acyloin condensation reaction between C atoms 2 and 3 of pyruvate and glyceraldehyde 3-phosphate to yield 1-deoxy-D-xylulose-5-phosphate (DXP).</text>
</comment>
<comment type="catalytic activity">
    <reaction evidence="1">
        <text>D-glyceraldehyde 3-phosphate + pyruvate + H(+) = 1-deoxy-D-xylulose 5-phosphate + CO2</text>
        <dbReference type="Rhea" id="RHEA:12605"/>
        <dbReference type="ChEBI" id="CHEBI:15361"/>
        <dbReference type="ChEBI" id="CHEBI:15378"/>
        <dbReference type="ChEBI" id="CHEBI:16526"/>
        <dbReference type="ChEBI" id="CHEBI:57792"/>
        <dbReference type="ChEBI" id="CHEBI:59776"/>
        <dbReference type="EC" id="2.2.1.7"/>
    </reaction>
</comment>
<comment type="cofactor">
    <cofactor evidence="1">
        <name>Mg(2+)</name>
        <dbReference type="ChEBI" id="CHEBI:18420"/>
    </cofactor>
    <text evidence="1">Binds 1 Mg(2+) ion per subunit.</text>
</comment>
<comment type="cofactor">
    <cofactor evidence="1">
        <name>thiamine diphosphate</name>
        <dbReference type="ChEBI" id="CHEBI:58937"/>
    </cofactor>
    <text evidence="1">Binds 1 thiamine pyrophosphate per subunit.</text>
</comment>
<comment type="pathway">
    <text evidence="1">Metabolic intermediate biosynthesis; 1-deoxy-D-xylulose 5-phosphate biosynthesis; 1-deoxy-D-xylulose 5-phosphate from D-glyceraldehyde 3-phosphate and pyruvate: step 1/1.</text>
</comment>
<comment type="subunit">
    <text evidence="1">Homodimer.</text>
</comment>
<comment type="similarity">
    <text evidence="1">Belongs to the transketolase family. DXPS subfamily.</text>
</comment>
<sequence length="614" mass="66831">MYPLLDRIEIPAQLRNLKRSQLPQLADELRSFLIESVAKTGGHLSSNLGTIELTIALHYIFDTPFDRLVWDVGHQTYAHKILTGRRTGMAHLRMQGGIAGFPRRDESEYDAFGTAHSSTSISAALGMAVAARINKIKQHAIAIIGDGAMSAGMAFEALNNAGVMDADLLVILNDNDMSISPPVGALNHYLAKLMSGRFYATARRAGERMLGVVPPVLELAKRAEEHVKGMVTPGTLFEEFGFNYIGPIDGHDLDILLTTLNNIKQLDGPQFLHIVTRKGKGYKPAEEDPVLYHGVGKFEPGKGVIPKPSTRPAYTQIFGDWLCDMAAKDSRLIGITPAMREGSGLIRFSKEYPDRYFDVGIAEQHAVTFAAGAACEGLKPVVAIYSTFLQRAYDQLIHDVAIQNLPVVFAIDRAGLVGADGPTHAGSFDLSYLRCIPNITVMMPADENECRQMLYTAFQLDTPTAVRYPRGTGPGVQIKQEMQIVPLGKGEIRRQGTRIALLAFGSMLSPCLEAGDELDATVVNMRFVKPLDQELVMTLAAEHELLVTVEENTIMGGAGSAVLECLASQGVNIRLLQLGLSDNFLDQGDPAQMLSDCGLDKTGIIKSVKERLSL</sequence>
<organism>
    <name type="scientific">Nitrosomonas eutropha (strain DSM 101675 / C91 / Nm57)</name>
    <dbReference type="NCBI Taxonomy" id="335283"/>
    <lineage>
        <taxon>Bacteria</taxon>
        <taxon>Pseudomonadati</taxon>
        <taxon>Pseudomonadota</taxon>
        <taxon>Betaproteobacteria</taxon>
        <taxon>Nitrosomonadales</taxon>
        <taxon>Nitrosomonadaceae</taxon>
        <taxon>Nitrosomonas</taxon>
    </lineage>
</organism>
<feature type="chain" id="PRO_1000019049" description="1-deoxy-D-xylulose-5-phosphate synthase">
    <location>
        <begin position="1"/>
        <end position="614"/>
    </location>
</feature>
<feature type="binding site" evidence="1">
    <location>
        <position position="74"/>
    </location>
    <ligand>
        <name>thiamine diphosphate</name>
        <dbReference type="ChEBI" id="CHEBI:58937"/>
    </ligand>
</feature>
<feature type="binding site" evidence="1">
    <location>
        <begin position="115"/>
        <end position="117"/>
    </location>
    <ligand>
        <name>thiamine diphosphate</name>
        <dbReference type="ChEBI" id="CHEBI:58937"/>
    </ligand>
</feature>
<feature type="binding site" evidence="1">
    <location>
        <position position="146"/>
    </location>
    <ligand>
        <name>Mg(2+)</name>
        <dbReference type="ChEBI" id="CHEBI:18420"/>
    </ligand>
</feature>
<feature type="binding site" evidence="1">
    <location>
        <begin position="147"/>
        <end position="148"/>
    </location>
    <ligand>
        <name>thiamine diphosphate</name>
        <dbReference type="ChEBI" id="CHEBI:58937"/>
    </ligand>
</feature>
<feature type="binding site" evidence="1">
    <location>
        <position position="175"/>
    </location>
    <ligand>
        <name>Mg(2+)</name>
        <dbReference type="ChEBI" id="CHEBI:18420"/>
    </ligand>
</feature>
<feature type="binding site" evidence="1">
    <location>
        <position position="175"/>
    </location>
    <ligand>
        <name>thiamine diphosphate</name>
        <dbReference type="ChEBI" id="CHEBI:58937"/>
    </ligand>
</feature>
<feature type="binding site" evidence="1">
    <location>
        <position position="282"/>
    </location>
    <ligand>
        <name>thiamine diphosphate</name>
        <dbReference type="ChEBI" id="CHEBI:58937"/>
    </ligand>
</feature>
<feature type="binding site" evidence="1">
    <location>
        <position position="363"/>
    </location>
    <ligand>
        <name>thiamine diphosphate</name>
        <dbReference type="ChEBI" id="CHEBI:58937"/>
    </ligand>
</feature>
<protein>
    <recommendedName>
        <fullName evidence="1">1-deoxy-D-xylulose-5-phosphate synthase</fullName>
        <ecNumber evidence="1">2.2.1.7</ecNumber>
    </recommendedName>
    <alternativeName>
        <fullName evidence="1">1-deoxyxylulose-5-phosphate synthase</fullName>
        <shortName evidence="1">DXP synthase</shortName>
        <shortName evidence="1">DXPS</shortName>
    </alternativeName>
</protein>